<organism>
    <name type="scientific">Mycoplasmoides gallisepticum (strain R(low / passage 15 / clone 2))</name>
    <name type="common">Mycoplasma gallisepticum</name>
    <dbReference type="NCBI Taxonomy" id="710127"/>
    <lineage>
        <taxon>Bacteria</taxon>
        <taxon>Bacillati</taxon>
        <taxon>Mycoplasmatota</taxon>
        <taxon>Mycoplasmoidales</taxon>
        <taxon>Mycoplasmoidaceae</taxon>
        <taxon>Mycoplasmoides</taxon>
    </lineage>
</organism>
<reference key="1">
    <citation type="journal article" date="2002" name="FEMS Microbiol. Lett.">
        <title>Mycoplasma gallisepticum rpoA gene cluster.</title>
        <authorList>
            <person name="Skamrov A.V."/>
            <person name="Feoktistova E.S."/>
            <person name="Gol'dman M.A."/>
            <person name="Bibilashvili R.S."/>
        </authorList>
    </citation>
    <scope>NUCLEOTIDE SEQUENCE [GENOMIC DNA]</scope>
    <source>
        <strain>A5969Var.B</strain>
    </source>
</reference>
<reference key="2">
    <citation type="journal article" date="2003" name="Microbiology">
        <title>The complete genome sequence of the avian pathogen Mycoplasma gallisepticum strain R(low).</title>
        <authorList>
            <person name="Papazisi L."/>
            <person name="Gorton T.S."/>
            <person name="Kutish G."/>
            <person name="Markham P.F."/>
            <person name="Browning G.F."/>
            <person name="Nguyen D.K."/>
            <person name="Swartzell S."/>
            <person name="Madan A."/>
            <person name="Mahairas G."/>
            <person name="Geary S.J."/>
        </authorList>
    </citation>
    <scope>NUCLEOTIDE SEQUENCE [LARGE SCALE GENOMIC DNA]</scope>
    <source>
        <strain>R(low / passage 15 / clone 2)</strain>
    </source>
</reference>
<sequence>MAKKKKTVASNGIAHIHATSNNSIITITDINGNAITWSSSGAIGYKGAKKKTPYSAGVAAEKAAKEAMAMGLSTIKIYVNGVGRGKETAIRSLAACGLTITEIHDVTPIPHNGCRPPKKPR</sequence>
<comment type="function">
    <text evidence="1">Located on the platform of the 30S subunit, it bridges several disparate RNA helices of the 16S rRNA. Forms part of the Shine-Dalgarno cleft in the 70S ribosome.</text>
</comment>
<comment type="subunit">
    <text evidence="1">Part of the 30S ribosomal subunit. Interacts with proteins S7 and S18. Binds to IF-3.</text>
</comment>
<comment type="similarity">
    <text evidence="1">Belongs to the universal ribosomal protein uS11 family.</text>
</comment>
<accession>Q9RDV7</accession>
<proteinExistence type="inferred from homology"/>
<keyword id="KW-1185">Reference proteome</keyword>
<keyword id="KW-0687">Ribonucleoprotein</keyword>
<keyword id="KW-0689">Ribosomal protein</keyword>
<keyword id="KW-0694">RNA-binding</keyword>
<keyword id="KW-0699">rRNA-binding</keyword>
<gene>
    <name evidence="1" type="primary">rpsK</name>
    <name evidence="1" type="synonym">rps11</name>
    <name type="ordered locus">MYCGA6290</name>
    <name type="ORF">MGA_0445</name>
</gene>
<protein>
    <recommendedName>
        <fullName evidence="1">Small ribosomal subunit protein uS11</fullName>
    </recommendedName>
    <alternativeName>
        <fullName evidence="2">30S ribosomal protein S11</fullName>
    </alternativeName>
</protein>
<name>RS11_MYCGA</name>
<dbReference type="EMBL" id="L35043">
    <property type="protein sequence ID" value="AAF19040.1"/>
    <property type="molecule type" value="Genomic_DNA"/>
</dbReference>
<dbReference type="EMBL" id="AE015450">
    <property type="protein sequence ID" value="AAP56979.1"/>
    <property type="molecule type" value="Genomic_DNA"/>
</dbReference>
<dbReference type="RefSeq" id="WP_011113888.1">
    <property type="nucleotide sequence ID" value="NC_004829.2"/>
</dbReference>
<dbReference type="SMR" id="Q9RDV7"/>
<dbReference type="GeneID" id="93510465"/>
<dbReference type="KEGG" id="mga:MGA_0445"/>
<dbReference type="HOGENOM" id="CLU_072439_5_0_14"/>
<dbReference type="OrthoDB" id="9806415at2"/>
<dbReference type="Proteomes" id="UP000001418">
    <property type="component" value="Chromosome"/>
</dbReference>
<dbReference type="GO" id="GO:1990904">
    <property type="term" value="C:ribonucleoprotein complex"/>
    <property type="evidence" value="ECO:0007669"/>
    <property type="project" value="UniProtKB-KW"/>
</dbReference>
<dbReference type="GO" id="GO:0005840">
    <property type="term" value="C:ribosome"/>
    <property type="evidence" value="ECO:0007669"/>
    <property type="project" value="UniProtKB-KW"/>
</dbReference>
<dbReference type="GO" id="GO:0019843">
    <property type="term" value="F:rRNA binding"/>
    <property type="evidence" value="ECO:0007669"/>
    <property type="project" value="UniProtKB-UniRule"/>
</dbReference>
<dbReference type="GO" id="GO:0003735">
    <property type="term" value="F:structural constituent of ribosome"/>
    <property type="evidence" value="ECO:0007669"/>
    <property type="project" value="InterPro"/>
</dbReference>
<dbReference type="GO" id="GO:0006412">
    <property type="term" value="P:translation"/>
    <property type="evidence" value="ECO:0007669"/>
    <property type="project" value="UniProtKB-UniRule"/>
</dbReference>
<dbReference type="FunFam" id="3.30.420.80:FF:000010">
    <property type="entry name" value="30S ribosomal protein S11"/>
    <property type="match status" value="1"/>
</dbReference>
<dbReference type="Gene3D" id="3.30.420.80">
    <property type="entry name" value="Ribosomal protein S11"/>
    <property type="match status" value="1"/>
</dbReference>
<dbReference type="HAMAP" id="MF_01310">
    <property type="entry name" value="Ribosomal_uS11"/>
    <property type="match status" value="1"/>
</dbReference>
<dbReference type="InterPro" id="IPR001971">
    <property type="entry name" value="Ribosomal_uS11"/>
</dbReference>
<dbReference type="InterPro" id="IPR019981">
    <property type="entry name" value="Ribosomal_uS11_bac-type"/>
</dbReference>
<dbReference type="InterPro" id="IPR018102">
    <property type="entry name" value="Ribosomal_uS11_CS"/>
</dbReference>
<dbReference type="InterPro" id="IPR036967">
    <property type="entry name" value="Ribosomal_uS11_sf"/>
</dbReference>
<dbReference type="NCBIfam" id="NF003698">
    <property type="entry name" value="PRK05309.1"/>
    <property type="match status" value="1"/>
</dbReference>
<dbReference type="NCBIfam" id="TIGR03632">
    <property type="entry name" value="uS11_bact"/>
    <property type="match status" value="1"/>
</dbReference>
<dbReference type="PANTHER" id="PTHR11759">
    <property type="entry name" value="40S RIBOSOMAL PROTEIN S14/30S RIBOSOMAL PROTEIN S11"/>
    <property type="match status" value="1"/>
</dbReference>
<dbReference type="Pfam" id="PF00411">
    <property type="entry name" value="Ribosomal_S11"/>
    <property type="match status" value="1"/>
</dbReference>
<dbReference type="PIRSF" id="PIRSF002131">
    <property type="entry name" value="Ribosomal_S11"/>
    <property type="match status" value="1"/>
</dbReference>
<dbReference type="SUPFAM" id="SSF53137">
    <property type="entry name" value="Translational machinery components"/>
    <property type="match status" value="1"/>
</dbReference>
<dbReference type="PROSITE" id="PS00054">
    <property type="entry name" value="RIBOSOMAL_S11"/>
    <property type="match status" value="1"/>
</dbReference>
<evidence type="ECO:0000255" key="1">
    <source>
        <dbReference type="HAMAP-Rule" id="MF_01310"/>
    </source>
</evidence>
<evidence type="ECO:0000305" key="2"/>
<feature type="chain" id="PRO_0000123176" description="Small ribosomal subunit protein uS11">
    <location>
        <begin position="1"/>
        <end position="121"/>
    </location>
</feature>
<feature type="sequence conflict" description="In Ref. 1; AAF19040." evidence="2" ref="1">
    <original>A</original>
    <variation>S</variation>
    <location>
        <position position="56"/>
    </location>
</feature>